<keyword id="KW-0068">Autocatalytic cleavage</keyword>
<keyword id="KW-0651">Protein splicing</keyword>
<keyword id="KW-1185">Reference proteome</keyword>
<organism>
    <name type="scientific">Mycobacterium leprae (strain TN)</name>
    <dbReference type="NCBI Taxonomy" id="272631"/>
    <lineage>
        <taxon>Bacteria</taxon>
        <taxon>Bacillati</taxon>
        <taxon>Actinomycetota</taxon>
        <taxon>Actinomycetes</taxon>
        <taxon>Mycobacteriales</taxon>
        <taxon>Mycobacteriaceae</taxon>
        <taxon>Mycobacterium</taxon>
    </lineage>
</organism>
<name>Y593_MYCLE</name>
<reference key="1">
    <citation type="submission" date="1993-11" db="EMBL/GenBank/DDBJ databases">
        <authorList>
            <person name="Smith D.R."/>
            <person name="Robison K."/>
        </authorList>
    </citation>
    <scope>NUCLEOTIDE SEQUENCE [GENOMIC DNA]</scope>
</reference>
<reference key="2">
    <citation type="journal article" date="2001" name="Nature">
        <title>Massive gene decay in the leprosy bacillus.</title>
        <authorList>
            <person name="Cole S.T."/>
            <person name="Eiglmeier K."/>
            <person name="Parkhill J."/>
            <person name="James K.D."/>
            <person name="Thomson N.R."/>
            <person name="Wheeler P.R."/>
            <person name="Honore N."/>
            <person name="Garnier T."/>
            <person name="Churcher C.M."/>
            <person name="Harris D.E."/>
            <person name="Mungall K.L."/>
            <person name="Basham D."/>
            <person name="Brown D."/>
            <person name="Chillingworth T."/>
            <person name="Connor R."/>
            <person name="Davies R.M."/>
            <person name="Devlin K."/>
            <person name="Duthoy S."/>
            <person name="Feltwell T."/>
            <person name="Fraser A."/>
            <person name="Hamlin N."/>
            <person name="Holroyd S."/>
            <person name="Hornsby T."/>
            <person name="Jagels K."/>
            <person name="Lacroix C."/>
            <person name="Maclean J."/>
            <person name="Moule S."/>
            <person name="Murphy L.D."/>
            <person name="Oliver K."/>
            <person name="Quail M.A."/>
            <person name="Rajandream M.A."/>
            <person name="Rutherford K.M."/>
            <person name="Rutter S."/>
            <person name="Seeger K."/>
            <person name="Simon S."/>
            <person name="Simmonds M."/>
            <person name="Skelton J."/>
            <person name="Squares R."/>
            <person name="Squares S."/>
            <person name="Stevens K."/>
            <person name="Taylor K."/>
            <person name="Whitehead S."/>
            <person name="Woodward J.R."/>
            <person name="Barrell B.G."/>
        </authorList>
    </citation>
    <scope>NUCLEOTIDE SEQUENCE [LARGE SCALE GENOMIC DNA]</scope>
    <source>
        <strain>TN</strain>
    </source>
</reference>
<gene>
    <name type="ordered locus">ML0593</name>
    <name type="ORF">B1496_C2_189</name>
    <name type="ORF">MLCL536.28c</name>
</gene>
<sequence length="869" mass="95573">MTRTSETTKSPAPELLTQQQAIDSLGKYGYGWADSDVAGASARRGLSEDVVRDISAKKDEPEWMLQARLKALRVFERKPMPRWGSNLDGIDFDNIKYFVRSTEKQAASWDELPEDIRNTYDRLGIPDAEKQRLVAGVAAQYESEVVYHQIRADLKDQGVVFLDTETGLREYPDIFKQYLGTVIPAGDNKFSALNTAVWSGGCLTADARINVKGKGLVSIADVQPGDEVFGVNIGCELERGKVLAKVASGTKPVYEMHVAGRALEATGNHQFLVARRVEEGKRTRWTAVWAPLEEIESGEPIAVARVLPDDSGTIFFSESELDIKNRTRQCLYFPCQNSVDLLWLLGLWLGDGHTAAPHKHMRQVAFSVPAGDPVHHTAIRVVSEQFGANVTVVNCGFIVSSKAFETWLAELGFSGDEKTKRLPAWIYSLPHEHQLALIGGLVDADGWTESSGATMSIAFASRELLEDVRQLAIGCGLYPDGALVERTRSATCRDGRIVTSTSWRLRIQGSLDRVGTRTPGKRGKPVSNKGRRQRYVAAAGLNFSSLSTDTVGFARLKSKTLVGEKPTYDIQVVGLENFVANGIVAHNSFIYVPPGVHVDIPLQAYFRINTENMGQFERTLIIADTGSYVHYVEGCTAPIYKSDSLHSAVVEIIVKPHARVRYTTIQNWSNNVYNLVTKRARVETGATMEWIDGNIGSKVTMKYPAVWMTGEHAKGEVLSVAFAGEGQHQDTGAKMLHLASNTSSNIVSKSVARGGGRTSYRGLVQVNKGAHGSRSSVKCDALLVDTISRSDTYPYVDIREDDVTMGHEATVSKVSENQLFYLMSRGLAEDEAMAMVVRGFVEPIAKELPMEYALELNRLIELQMEGAVG</sequence>
<comment type="PTM">
    <text evidence="3">This protein undergoes a protein self splicing that involves a post-translational excision of the intervening region (intein) followed by peptide ligation.</text>
</comment>
<comment type="similarity">
    <text evidence="3">Belongs to the iron-sulfur cluster assembly SufBD family.</text>
</comment>
<dbReference type="EMBL" id="U00013">
    <property type="protein sequence ID" value="AAA17127.1"/>
    <property type="molecule type" value="Genomic_DNA"/>
</dbReference>
<dbReference type="EMBL" id="Z99125">
    <property type="protein sequence ID" value="CAB16171.1"/>
    <property type="molecule type" value="Genomic_DNA"/>
</dbReference>
<dbReference type="EMBL" id="Z99125">
    <property type="protein sequence ID" value="CAB16172.1"/>
    <property type="molecule type" value="Genomic_DNA"/>
</dbReference>
<dbReference type="EMBL" id="AL583919">
    <property type="protein sequence ID" value="CAC30101.1"/>
    <property type="molecule type" value="Genomic_DNA"/>
</dbReference>
<dbReference type="PIR" id="A86983">
    <property type="entry name" value="A86983"/>
</dbReference>
<dbReference type="PIR" id="S72760">
    <property type="entry name" value="S72760"/>
</dbReference>
<dbReference type="RefSeq" id="NP_301502.1">
    <property type="nucleotide sequence ID" value="NC_002677.1"/>
</dbReference>
<dbReference type="SMR" id="Q49689"/>
<dbReference type="STRING" id="272631.gene:17574414"/>
<dbReference type="KEGG" id="mle:ML0593"/>
<dbReference type="PATRIC" id="fig|272631.5.peg.1031"/>
<dbReference type="Leproma" id="ML0593"/>
<dbReference type="eggNOG" id="COG0719">
    <property type="taxonomic scope" value="Bacteria"/>
</dbReference>
<dbReference type="eggNOG" id="COG1372">
    <property type="taxonomic scope" value="Bacteria"/>
</dbReference>
<dbReference type="HOGENOM" id="CLU_007402_0_0_11"/>
<dbReference type="OrthoDB" id="9803529at2"/>
<dbReference type="Proteomes" id="UP000000806">
    <property type="component" value="Chromosome"/>
</dbReference>
<dbReference type="GO" id="GO:0004519">
    <property type="term" value="F:endonuclease activity"/>
    <property type="evidence" value="ECO:0007669"/>
    <property type="project" value="InterPro"/>
</dbReference>
<dbReference type="GO" id="GO:0016539">
    <property type="term" value="P:intein-mediated protein splicing"/>
    <property type="evidence" value="ECO:0007669"/>
    <property type="project" value="InterPro"/>
</dbReference>
<dbReference type="GO" id="GO:0016226">
    <property type="term" value="P:iron-sulfur cluster assembly"/>
    <property type="evidence" value="ECO:0007669"/>
    <property type="project" value="InterPro"/>
</dbReference>
<dbReference type="CDD" id="cd00081">
    <property type="entry name" value="Hint"/>
    <property type="match status" value="1"/>
</dbReference>
<dbReference type="Gene3D" id="2.170.16.10">
    <property type="entry name" value="Hedgehog/Intein (Hint) domain"/>
    <property type="match status" value="2"/>
</dbReference>
<dbReference type="Gene3D" id="3.10.28.10">
    <property type="entry name" value="Homing endonucleases"/>
    <property type="match status" value="1"/>
</dbReference>
<dbReference type="InterPro" id="IPR055346">
    <property type="entry name" value="Fe-S_cluster_assembly_SufBD"/>
</dbReference>
<dbReference type="InterPro" id="IPR003586">
    <property type="entry name" value="Hint_dom_C"/>
</dbReference>
<dbReference type="InterPro" id="IPR003587">
    <property type="entry name" value="Hint_dom_N"/>
</dbReference>
<dbReference type="InterPro" id="IPR036844">
    <property type="entry name" value="Hint_dom_sf"/>
</dbReference>
<dbReference type="InterPro" id="IPR027434">
    <property type="entry name" value="Homing_endonucl"/>
</dbReference>
<dbReference type="InterPro" id="IPR006142">
    <property type="entry name" value="INTEIN"/>
</dbReference>
<dbReference type="InterPro" id="IPR030934">
    <property type="entry name" value="Intein_C"/>
</dbReference>
<dbReference type="InterPro" id="IPR004042">
    <property type="entry name" value="Intein_endonuc_central"/>
</dbReference>
<dbReference type="InterPro" id="IPR006141">
    <property type="entry name" value="Intein_N"/>
</dbReference>
<dbReference type="InterPro" id="IPR004860">
    <property type="entry name" value="LAGLIDADG_dom"/>
</dbReference>
<dbReference type="InterPro" id="IPR010231">
    <property type="entry name" value="SUF_FeS_clus_asmbl_SufB"/>
</dbReference>
<dbReference type="InterPro" id="IPR000825">
    <property type="entry name" value="SUF_FeS_clus_asmbl_SufBD_core"/>
</dbReference>
<dbReference type="InterPro" id="IPR037284">
    <property type="entry name" value="SUF_FeS_clus_asmbl_SufBD_sf"/>
</dbReference>
<dbReference type="NCBIfam" id="TIGR01443">
    <property type="entry name" value="intein_Cterm"/>
    <property type="match status" value="1"/>
</dbReference>
<dbReference type="NCBIfam" id="TIGR01980">
    <property type="entry name" value="sufB"/>
    <property type="match status" value="1"/>
</dbReference>
<dbReference type="PANTHER" id="PTHR30508">
    <property type="entry name" value="FES CLUSTER ASSEMBLY PROTEIN SUF"/>
    <property type="match status" value="1"/>
</dbReference>
<dbReference type="PANTHER" id="PTHR30508:SF1">
    <property type="entry name" value="UPF0051 PROTEIN ABCI8, CHLOROPLASTIC-RELATED"/>
    <property type="match status" value="1"/>
</dbReference>
<dbReference type="Pfam" id="PF14890">
    <property type="entry name" value="Intein_splicing"/>
    <property type="match status" value="1"/>
</dbReference>
<dbReference type="Pfam" id="PF14528">
    <property type="entry name" value="LAGLIDADG_3"/>
    <property type="match status" value="1"/>
</dbReference>
<dbReference type="Pfam" id="PF01458">
    <property type="entry name" value="SUFBD_core"/>
    <property type="match status" value="1"/>
</dbReference>
<dbReference type="PRINTS" id="PR00379">
    <property type="entry name" value="INTEIN"/>
</dbReference>
<dbReference type="SMART" id="SM00305">
    <property type="entry name" value="HintC"/>
    <property type="match status" value="1"/>
</dbReference>
<dbReference type="SMART" id="SM00306">
    <property type="entry name" value="HintN"/>
    <property type="match status" value="1"/>
</dbReference>
<dbReference type="SUPFAM" id="SSF51294">
    <property type="entry name" value="Hedgehog/intein (Hint) domain"/>
    <property type="match status" value="1"/>
</dbReference>
<dbReference type="SUPFAM" id="SSF55608">
    <property type="entry name" value="Homing endonucleases"/>
    <property type="match status" value="1"/>
</dbReference>
<dbReference type="SUPFAM" id="SSF101960">
    <property type="entry name" value="Stabilizer of iron transporter SufD"/>
    <property type="match status" value="2"/>
</dbReference>
<dbReference type="PROSITE" id="PS50818">
    <property type="entry name" value="INTEIN_C_TER"/>
    <property type="match status" value="1"/>
</dbReference>
<dbReference type="PROSITE" id="PS50819">
    <property type="entry name" value="INTEIN_ENDONUCLEASE"/>
    <property type="match status" value="1"/>
</dbReference>
<dbReference type="PROSITE" id="PS50817">
    <property type="entry name" value="INTEIN_N_TER"/>
    <property type="match status" value="1"/>
</dbReference>
<evidence type="ECO:0000255" key="1"/>
<evidence type="ECO:0000255" key="2">
    <source>
        <dbReference type="PROSITE-ProRule" id="PRU00273"/>
    </source>
</evidence>
<evidence type="ECO:0000305" key="3"/>
<protein>
    <recommendedName>
        <fullName>Iron-sulfur cluster assembly SufBD family protein ML0593</fullName>
    </recommendedName>
    <component>
        <recommendedName>
            <fullName>Mle pps1 intein</fullName>
        </recommendedName>
    </component>
</protein>
<proteinExistence type="inferred from homology"/>
<accession>Q49689</accession>
<accession>O33141</accession>
<feature type="chain" id="PRO_0000036187" description="Iron-sulfur cluster assembly SufBD family protein ML0593, 1st part" evidence="1">
    <location>
        <begin position="1"/>
        <end position="201"/>
    </location>
</feature>
<feature type="chain" id="PRO_0000036188" description="Mle pps1 intein" evidence="1">
    <location>
        <begin position="202"/>
        <end position="587"/>
    </location>
</feature>
<feature type="chain" id="PRO_0000036189" description="Iron-sulfur cluster assembly SufBD family protein ML0593, 2nd part" evidence="1">
    <location>
        <begin position="588"/>
        <end position="869"/>
    </location>
</feature>
<feature type="domain" description="DOD-type homing endonuclease" evidence="2">
    <location>
        <begin position="344"/>
        <end position="477"/>
    </location>
</feature>
<feature type="sequence conflict" description="In Ref. 1; AAA17127." evidence="3" ref="1">
    <original>A</original>
    <variation>R</variation>
    <location>
        <position position="482"/>
    </location>
</feature>